<organism>
    <name type="scientific">Mycobacterium tuberculosis (strain ATCC 25618 / H37Rv)</name>
    <dbReference type="NCBI Taxonomy" id="83332"/>
    <lineage>
        <taxon>Bacteria</taxon>
        <taxon>Bacillati</taxon>
        <taxon>Actinomycetota</taxon>
        <taxon>Actinomycetes</taxon>
        <taxon>Mycobacteriales</taxon>
        <taxon>Mycobacteriaceae</taxon>
        <taxon>Mycobacterium</taxon>
        <taxon>Mycobacterium tuberculosis complex</taxon>
    </lineage>
</organism>
<gene>
    <name type="primary">prfA</name>
    <name type="ordered locus">Rv1299</name>
    <name type="ORF">MTCY373.19</name>
</gene>
<reference key="1">
    <citation type="journal article" date="1998" name="Nature">
        <title>Deciphering the biology of Mycobacterium tuberculosis from the complete genome sequence.</title>
        <authorList>
            <person name="Cole S.T."/>
            <person name="Brosch R."/>
            <person name="Parkhill J."/>
            <person name="Garnier T."/>
            <person name="Churcher C.M."/>
            <person name="Harris D.E."/>
            <person name="Gordon S.V."/>
            <person name="Eiglmeier K."/>
            <person name="Gas S."/>
            <person name="Barry C.E. III"/>
            <person name="Tekaia F."/>
            <person name="Badcock K."/>
            <person name="Basham D."/>
            <person name="Brown D."/>
            <person name="Chillingworth T."/>
            <person name="Connor R."/>
            <person name="Davies R.M."/>
            <person name="Devlin K."/>
            <person name="Feltwell T."/>
            <person name="Gentles S."/>
            <person name="Hamlin N."/>
            <person name="Holroyd S."/>
            <person name="Hornsby T."/>
            <person name="Jagels K."/>
            <person name="Krogh A."/>
            <person name="McLean J."/>
            <person name="Moule S."/>
            <person name="Murphy L.D."/>
            <person name="Oliver S."/>
            <person name="Osborne J."/>
            <person name="Quail M.A."/>
            <person name="Rajandream M.A."/>
            <person name="Rogers J."/>
            <person name="Rutter S."/>
            <person name="Seeger K."/>
            <person name="Skelton S."/>
            <person name="Squares S."/>
            <person name="Squares R."/>
            <person name="Sulston J.E."/>
            <person name="Taylor K."/>
            <person name="Whitehead S."/>
            <person name="Barrell B.G."/>
        </authorList>
    </citation>
    <scope>NUCLEOTIDE SEQUENCE [LARGE SCALE GENOMIC DNA]</scope>
    <source>
        <strain>ATCC 25618 / H37Rv</strain>
    </source>
</reference>
<reference key="2">
    <citation type="journal article" date="2011" name="Mol. Cell. Proteomics">
        <title>Proteogenomic analysis of Mycobacterium tuberculosis by high resolution mass spectrometry.</title>
        <authorList>
            <person name="Kelkar D.S."/>
            <person name="Kumar D."/>
            <person name="Kumar P."/>
            <person name="Balakrishnan L."/>
            <person name="Muthusamy B."/>
            <person name="Yadav A.K."/>
            <person name="Shrivastava P."/>
            <person name="Marimuthu A."/>
            <person name="Anand S."/>
            <person name="Sundaram H."/>
            <person name="Kingsbury R."/>
            <person name="Harsha H.C."/>
            <person name="Nair B."/>
            <person name="Prasad T.S."/>
            <person name="Chauhan D.S."/>
            <person name="Katoch K."/>
            <person name="Katoch V.M."/>
            <person name="Kumar P."/>
            <person name="Chaerkady R."/>
            <person name="Ramachandran S."/>
            <person name="Dash D."/>
            <person name="Pandey A."/>
        </authorList>
    </citation>
    <scope>ACETYLATION [LARGE SCALE ANALYSIS] AT THR-2</scope>
    <scope>CLEAVAGE OF INITIATOR METHIONINE [LARGE SCALE ANALYSIS]</scope>
    <scope>IDENTIFICATION BY MASS SPECTROMETRY [LARGE SCALE ANALYSIS]</scope>
    <source>
        <strain>ATCC 25618 / H37Rv</strain>
    </source>
</reference>
<comment type="function">
    <text evidence="1">Peptide chain release factor 1 directs the termination of translation in response to the peptide chain termination codons UAG and UAA.</text>
</comment>
<comment type="subcellular location">
    <subcellularLocation>
        <location evidence="1">Cytoplasm</location>
    </subcellularLocation>
</comment>
<comment type="PTM">
    <text evidence="1">Methylated by PrmC. Methylation increases the termination efficiency of RF1 (By similarity).</text>
</comment>
<comment type="similarity">
    <text evidence="2">Belongs to the prokaryotic/mitochondrial release factor family.</text>
</comment>
<protein>
    <recommendedName>
        <fullName>Peptide chain release factor 1</fullName>
        <shortName>RF-1</shortName>
    </recommendedName>
</protein>
<proteinExistence type="evidence at protein level"/>
<keyword id="KW-0007">Acetylation</keyword>
<keyword id="KW-0963">Cytoplasm</keyword>
<keyword id="KW-0488">Methylation</keyword>
<keyword id="KW-0648">Protein biosynthesis</keyword>
<keyword id="KW-1185">Reference proteome</keyword>
<evidence type="ECO:0000250" key="1"/>
<evidence type="ECO:0000305" key="2"/>
<evidence type="ECO:0007744" key="3">
    <source>
    </source>
</evidence>
<dbReference type="EMBL" id="AL123456">
    <property type="protein sequence ID" value="CCP44056.1"/>
    <property type="molecule type" value="Genomic_DNA"/>
</dbReference>
<dbReference type="PIR" id="G70773">
    <property type="entry name" value="G70773"/>
</dbReference>
<dbReference type="RefSeq" id="NP_215815.1">
    <property type="nucleotide sequence ID" value="NC_000962.3"/>
</dbReference>
<dbReference type="RefSeq" id="WP_003406670.1">
    <property type="nucleotide sequence ID" value="NZ_NVQJ01000030.1"/>
</dbReference>
<dbReference type="SMR" id="P9WHG3"/>
<dbReference type="FunCoup" id="P9WHG3">
    <property type="interactions" value="424"/>
</dbReference>
<dbReference type="STRING" id="83332.Rv1299"/>
<dbReference type="iPTMnet" id="P9WHG3"/>
<dbReference type="PaxDb" id="83332-Rv1299"/>
<dbReference type="DNASU" id="886948"/>
<dbReference type="GeneID" id="45425273"/>
<dbReference type="GeneID" id="886948"/>
<dbReference type="KEGG" id="mtu:Rv1299"/>
<dbReference type="KEGG" id="mtv:RVBD_1299"/>
<dbReference type="TubercuList" id="Rv1299"/>
<dbReference type="eggNOG" id="COG0216">
    <property type="taxonomic scope" value="Bacteria"/>
</dbReference>
<dbReference type="InParanoid" id="P9WHG3"/>
<dbReference type="OrthoDB" id="9806673at2"/>
<dbReference type="PhylomeDB" id="P9WHG3"/>
<dbReference type="Proteomes" id="UP000001584">
    <property type="component" value="Chromosome"/>
</dbReference>
<dbReference type="GO" id="GO:0005737">
    <property type="term" value="C:cytoplasm"/>
    <property type="evidence" value="ECO:0007669"/>
    <property type="project" value="UniProtKB-SubCell"/>
</dbReference>
<dbReference type="GO" id="GO:0016149">
    <property type="term" value="F:translation release factor activity, codon specific"/>
    <property type="evidence" value="ECO:0007669"/>
    <property type="project" value="UniProtKB-UniRule"/>
</dbReference>
<dbReference type="FunFam" id="3.30.160.20:FF:000004">
    <property type="entry name" value="Peptide chain release factor 1"/>
    <property type="match status" value="1"/>
</dbReference>
<dbReference type="Gene3D" id="3.30.160.20">
    <property type="match status" value="1"/>
</dbReference>
<dbReference type="Gene3D" id="3.30.70.1660">
    <property type="match status" value="1"/>
</dbReference>
<dbReference type="Gene3D" id="6.10.140.1950">
    <property type="match status" value="1"/>
</dbReference>
<dbReference type="HAMAP" id="MF_00093">
    <property type="entry name" value="Rel_fac_1"/>
    <property type="match status" value="1"/>
</dbReference>
<dbReference type="InterPro" id="IPR005139">
    <property type="entry name" value="PCRF"/>
</dbReference>
<dbReference type="InterPro" id="IPR000352">
    <property type="entry name" value="Pep_chain_release_fac_I"/>
</dbReference>
<dbReference type="InterPro" id="IPR045853">
    <property type="entry name" value="Pep_chain_release_fac_I_sf"/>
</dbReference>
<dbReference type="InterPro" id="IPR050057">
    <property type="entry name" value="Prokaryotic/Mito_RF"/>
</dbReference>
<dbReference type="InterPro" id="IPR004373">
    <property type="entry name" value="RF-1"/>
</dbReference>
<dbReference type="NCBIfam" id="TIGR00019">
    <property type="entry name" value="prfA"/>
    <property type="match status" value="1"/>
</dbReference>
<dbReference type="NCBIfam" id="NF001859">
    <property type="entry name" value="PRK00591.1"/>
    <property type="match status" value="1"/>
</dbReference>
<dbReference type="PANTHER" id="PTHR43804">
    <property type="entry name" value="LD18447P"/>
    <property type="match status" value="1"/>
</dbReference>
<dbReference type="PANTHER" id="PTHR43804:SF7">
    <property type="entry name" value="LD18447P"/>
    <property type="match status" value="1"/>
</dbReference>
<dbReference type="Pfam" id="PF03462">
    <property type="entry name" value="PCRF"/>
    <property type="match status" value="1"/>
</dbReference>
<dbReference type="Pfam" id="PF00472">
    <property type="entry name" value="RF-1"/>
    <property type="match status" value="1"/>
</dbReference>
<dbReference type="SMART" id="SM00937">
    <property type="entry name" value="PCRF"/>
    <property type="match status" value="1"/>
</dbReference>
<dbReference type="SUPFAM" id="SSF75620">
    <property type="entry name" value="Release factor"/>
    <property type="match status" value="1"/>
</dbReference>
<dbReference type="PROSITE" id="PS00745">
    <property type="entry name" value="RF_PROK_I"/>
    <property type="match status" value="1"/>
</dbReference>
<sequence length="357" mass="39036">MTQPVQTIDVLLAEHAELELALADPALHSNPAEARRVGRRFARLAPIVATHRKLTSARDDLETARELVASDESFAAEVAALEARVGELDAQLTDMLAPRDPHDADDIVLEVKSGEGGEESALFAADLARMYIRYAERHGWAVTVLDETTSDLGGYKDATLAIASKADTPDGVWSRMKFEGGVHRVQRVPVTESQGRVHTSAAGVLVYPEPEEVGQVQIDESDLRIDVFRSSGKGGQGVNTTDSAVRITHLPTGIVVTCQNERSQLQNKTRALQVLAARLQAMAEEQALADASADRASQIRTVDRSERIRTYNFPENRITDHRIGYKSHNLDQVLDGDLDALFDALSAADKQSRLRQS</sequence>
<accession>P9WHG3</accession>
<accession>L0T686</accession>
<accession>P66016</accession>
<accession>Q10605</accession>
<feature type="initiator methionine" description="Removed" evidence="3">
    <location>
        <position position="1"/>
    </location>
</feature>
<feature type="chain" id="PRO_0000177711" description="Peptide chain release factor 1">
    <location>
        <begin position="2"/>
        <end position="357"/>
    </location>
</feature>
<feature type="modified residue" description="N-acetylthreonine" evidence="3">
    <location>
        <position position="2"/>
    </location>
</feature>
<feature type="modified residue" description="N5-methylglutamine" evidence="1">
    <location>
        <position position="236"/>
    </location>
</feature>
<name>RF1_MYCTU</name>